<comment type="function">
    <text evidence="1">Catalyzes the GTP-dependent phosphorylation of the 3'-hydroxyl group of dephosphocoenzyme A to form coenzyme A (CoA).</text>
</comment>
<comment type="catalytic activity">
    <reaction evidence="1">
        <text>3'-dephospho-CoA + GTP = GDP + CoA + H(+)</text>
        <dbReference type="Rhea" id="RHEA:61156"/>
        <dbReference type="ChEBI" id="CHEBI:15378"/>
        <dbReference type="ChEBI" id="CHEBI:37565"/>
        <dbReference type="ChEBI" id="CHEBI:57287"/>
        <dbReference type="ChEBI" id="CHEBI:57328"/>
        <dbReference type="ChEBI" id="CHEBI:58189"/>
        <dbReference type="EC" id="2.7.1.237"/>
    </reaction>
</comment>
<comment type="pathway">
    <text evidence="1">Cofactor biosynthesis; coenzyme A biosynthesis.</text>
</comment>
<comment type="similarity">
    <text evidence="1">Belongs to the GTP-dependent DPCK family.</text>
</comment>
<proteinExistence type="inferred from homology"/>
<gene>
    <name type="ordered locus">Maeo_0282</name>
</gene>
<sequence>MYMLNESTKEILKKPFGKVYKELPPINRKVNIIAVGDITTKNLLSKSIIPNLSIIDLKTKRNIPVKINHKFKTVFEVNNPQGCISDEAEETIKYISSLDMVDTALIVKDGEEDLLTMMVIRYFPKDTIVLYGQPDEGVVLLTINQDLKHKINNILSMMDKI</sequence>
<organism>
    <name type="scientific">Methanococcus aeolicus (strain ATCC BAA-1280 / DSM 17508 / OCM 812 / Nankai-3)</name>
    <dbReference type="NCBI Taxonomy" id="419665"/>
    <lineage>
        <taxon>Archaea</taxon>
        <taxon>Methanobacteriati</taxon>
        <taxon>Methanobacteriota</taxon>
        <taxon>Methanomada group</taxon>
        <taxon>Methanococci</taxon>
        <taxon>Methanococcales</taxon>
        <taxon>Methanococcaceae</taxon>
        <taxon>Methanococcus</taxon>
    </lineage>
</organism>
<keyword id="KW-0173">Coenzyme A biosynthesis</keyword>
<keyword id="KW-0342">GTP-binding</keyword>
<keyword id="KW-0418">Kinase</keyword>
<keyword id="KW-0547">Nucleotide-binding</keyword>
<keyword id="KW-0808">Transferase</keyword>
<protein>
    <recommendedName>
        <fullName evidence="1">GTP-dependent dephospho-CoA kinase</fullName>
        <ecNumber evidence="1">2.7.1.237</ecNumber>
    </recommendedName>
    <alternativeName>
        <fullName evidence="1">Dephospho-coenzyme A kinase</fullName>
        <shortName evidence="1">DPCK</shortName>
    </alternativeName>
</protein>
<accession>A6UTP9</accession>
<feature type="chain" id="PRO_1000025488" description="GTP-dependent dephospho-CoA kinase">
    <location>
        <begin position="1"/>
        <end position="161"/>
    </location>
</feature>
<feature type="binding site" evidence="1">
    <location>
        <position position="37"/>
    </location>
    <ligand>
        <name>GTP</name>
        <dbReference type="ChEBI" id="CHEBI:37565"/>
    </ligand>
</feature>
<feature type="binding site" evidence="1">
    <location>
        <position position="38"/>
    </location>
    <ligand>
        <name>GTP</name>
        <dbReference type="ChEBI" id="CHEBI:37565"/>
    </ligand>
</feature>
<feature type="binding site" evidence="1">
    <location>
        <position position="56"/>
    </location>
    <ligand>
        <name>GTP</name>
        <dbReference type="ChEBI" id="CHEBI:37565"/>
    </ligand>
</feature>
<feature type="binding site" evidence="1">
    <location>
        <position position="58"/>
    </location>
    <ligand>
        <name>GTP</name>
        <dbReference type="ChEBI" id="CHEBI:37565"/>
    </ligand>
</feature>
<feature type="binding site" evidence="1">
    <location>
        <position position="112"/>
    </location>
    <ligand>
        <name>GTP</name>
        <dbReference type="ChEBI" id="CHEBI:37565"/>
    </ligand>
</feature>
<feature type="binding site" evidence="1">
    <location>
        <position position="135"/>
    </location>
    <ligand>
        <name>GTP</name>
        <dbReference type="ChEBI" id="CHEBI:37565"/>
    </ligand>
</feature>
<evidence type="ECO:0000255" key="1">
    <source>
        <dbReference type="HAMAP-Rule" id="MF_00590"/>
    </source>
</evidence>
<name>DPCKG_META3</name>
<dbReference type="EC" id="2.7.1.237" evidence="1"/>
<dbReference type="EMBL" id="CP000743">
    <property type="protein sequence ID" value="ABR55871.1"/>
    <property type="molecule type" value="Genomic_DNA"/>
</dbReference>
<dbReference type="RefSeq" id="WP_011973003.1">
    <property type="nucleotide sequence ID" value="NC_009635.1"/>
</dbReference>
<dbReference type="SMR" id="A6UTP9"/>
<dbReference type="STRING" id="419665.Maeo_0282"/>
<dbReference type="GeneID" id="5327318"/>
<dbReference type="KEGG" id="mae:Maeo_0282"/>
<dbReference type="eggNOG" id="arCOG04076">
    <property type="taxonomic scope" value="Archaea"/>
</dbReference>
<dbReference type="HOGENOM" id="CLU_120795_1_0_2"/>
<dbReference type="OrthoDB" id="15447at2157"/>
<dbReference type="UniPathway" id="UPA00241"/>
<dbReference type="Proteomes" id="UP000001106">
    <property type="component" value="Chromosome"/>
</dbReference>
<dbReference type="GO" id="GO:0005525">
    <property type="term" value="F:GTP binding"/>
    <property type="evidence" value="ECO:0007669"/>
    <property type="project" value="UniProtKB-UniRule"/>
</dbReference>
<dbReference type="GO" id="GO:0016301">
    <property type="term" value="F:kinase activity"/>
    <property type="evidence" value="ECO:0007669"/>
    <property type="project" value="UniProtKB-UniRule"/>
</dbReference>
<dbReference type="GO" id="GO:0015937">
    <property type="term" value="P:coenzyme A biosynthetic process"/>
    <property type="evidence" value="ECO:0007669"/>
    <property type="project" value="UniProtKB-UniRule"/>
</dbReference>
<dbReference type="HAMAP" id="MF_00590">
    <property type="entry name" value="Dephospho_CoA_kinase_GTP_dep"/>
    <property type="match status" value="1"/>
</dbReference>
<dbReference type="InterPro" id="IPR007164">
    <property type="entry name" value="GTP-dep_dephospho-CoA_kin"/>
</dbReference>
<dbReference type="PANTHER" id="PTHR40732:SF1">
    <property type="entry name" value="GTP-DEPENDENT DEPHOSPHO-COA KINASE"/>
    <property type="match status" value="1"/>
</dbReference>
<dbReference type="PANTHER" id="PTHR40732">
    <property type="entry name" value="UPF0218 PROTEIN TK1697"/>
    <property type="match status" value="1"/>
</dbReference>
<dbReference type="Pfam" id="PF04019">
    <property type="entry name" value="DUF359"/>
    <property type="match status" value="1"/>
</dbReference>
<dbReference type="PIRSF" id="PIRSF006533">
    <property type="entry name" value="UCP006533"/>
    <property type="match status" value="1"/>
</dbReference>
<reference key="1">
    <citation type="submission" date="2007-06" db="EMBL/GenBank/DDBJ databases">
        <title>Complete sequence of Methanococcus aeolicus Nankai-3.</title>
        <authorList>
            <consortium name="US DOE Joint Genome Institute"/>
            <person name="Copeland A."/>
            <person name="Lucas S."/>
            <person name="Lapidus A."/>
            <person name="Barry K."/>
            <person name="Glavina del Rio T."/>
            <person name="Dalin E."/>
            <person name="Tice H."/>
            <person name="Pitluck S."/>
            <person name="Chain P."/>
            <person name="Malfatti S."/>
            <person name="Shin M."/>
            <person name="Vergez L."/>
            <person name="Schmutz J."/>
            <person name="Larimer F."/>
            <person name="Land M."/>
            <person name="Hauser L."/>
            <person name="Kyrpides N."/>
            <person name="Lykidis A."/>
            <person name="Sieprawska-Lupa M."/>
            <person name="Whitman W.B."/>
            <person name="Richardson P."/>
        </authorList>
    </citation>
    <scope>NUCLEOTIDE SEQUENCE [LARGE SCALE GENOMIC DNA]</scope>
    <source>
        <strain>ATCC BAA-1280 / DSM 17508 / OCM 812 / Nankai-3</strain>
    </source>
</reference>